<keyword id="KW-1185">Reference proteome</keyword>
<gene>
    <name type="primary">ycgN</name>
    <name type="ordered locus">SF1170</name>
    <name type="ordered locus">S1258</name>
</gene>
<protein>
    <recommendedName>
        <fullName>UPF0260 protein YcgN</fullName>
    </recommendedName>
</protein>
<evidence type="ECO:0000305" key="1"/>
<organism>
    <name type="scientific">Shigella flexneri</name>
    <dbReference type="NCBI Taxonomy" id="623"/>
    <lineage>
        <taxon>Bacteria</taxon>
        <taxon>Pseudomonadati</taxon>
        <taxon>Pseudomonadota</taxon>
        <taxon>Gammaproteobacteria</taxon>
        <taxon>Enterobacterales</taxon>
        <taxon>Enterobacteriaceae</taxon>
        <taxon>Shigella</taxon>
    </lineage>
</organism>
<accession>P0A8L6</accession>
<accession>P76005</accession>
<accession>Q9R3F1</accession>
<name>YCGN_SHIFL</name>
<sequence>MAEHLMSDVPFWQSKTLDEMSDAEWESLCDGCGQCCLHKLMDEDTDEIYFTNVACRQLNIKTCQCRNYERRFEFEPDCIKLTRENLPTFEWLPMTCAYRLLAEGKDLPAWHPLLTGSKAAMHGERISVRHIAVKESEVIDWQDHILNKPDWAQ</sequence>
<reference key="1">
    <citation type="journal article" date="2002" name="Nucleic Acids Res.">
        <title>Genome sequence of Shigella flexneri 2a: insights into pathogenicity through comparison with genomes of Escherichia coli K12 and O157.</title>
        <authorList>
            <person name="Jin Q."/>
            <person name="Yuan Z."/>
            <person name="Xu J."/>
            <person name="Wang Y."/>
            <person name="Shen Y."/>
            <person name="Lu W."/>
            <person name="Wang J."/>
            <person name="Liu H."/>
            <person name="Yang J."/>
            <person name="Yang F."/>
            <person name="Zhang X."/>
            <person name="Zhang J."/>
            <person name="Yang G."/>
            <person name="Wu H."/>
            <person name="Qu D."/>
            <person name="Dong J."/>
            <person name="Sun L."/>
            <person name="Xue Y."/>
            <person name="Zhao A."/>
            <person name="Gao Y."/>
            <person name="Zhu J."/>
            <person name="Kan B."/>
            <person name="Ding K."/>
            <person name="Chen S."/>
            <person name="Cheng H."/>
            <person name="Yao Z."/>
            <person name="He B."/>
            <person name="Chen R."/>
            <person name="Ma D."/>
            <person name="Qiang B."/>
            <person name="Wen Y."/>
            <person name="Hou Y."/>
            <person name="Yu J."/>
        </authorList>
    </citation>
    <scope>NUCLEOTIDE SEQUENCE [LARGE SCALE GENOMIC DNA]</scope>
    <source>
        <strain>301 / Serotype 2a</strain>
    </source>
</reference>
<reference key="2">
    <citation type="journal article" date="2003" name="Infect. Immun.">
        <title>Complete genome sequence and comparative genomics of Shigella flexneri serotype 2a strain 2457T.</title>
        <authorList>
            <person name="Wei J."/>
            <person name="Goldberg M.B."/>
            <person name="Burland V."/>
            <person name="Venkatesan M.M."/>
            <person name="Deng W."/>
            <person name="Fournier G."/>
            <person name="Mayhew G.F."/>
            <person name="Plunkett G. III"/>
            <person name="Rose D.J."/>
            <person name="Darling A."/>
            <person name="Mau B."/>
            <person name="Perna N.T."/>
            <person name="Payne S.M."/>
            <person name="Runyen-Janecky L.J."/>
            <person name="Zhou S."/>
            <person name="Schwartz D.C."/>
            <person name="Blattner F.R."/>
        </authorList>
    </citation>
    <scope>NUCLEOTIDE SEQUENCE [LARGE SCALE GENOMIC DNA]</scope>
    <source>
        <strain>ATCC 700930 / 2457T / Serotype 2a</strain>
    </source>
</reference>
<feature type="chain" id="PRO_0000214594" description="UPF0260 protein YcgN">
    <location>
        <begin position="1"/>
        <end position="153"/>
    </location>
</feature>
<comment type="similarity">
    <text evidence="1">Belongs to the UPF0260 family.</text>
</comment>
<proteinExistence type="inferred from homology"/>
<dbReference type="EMBL" id="AE005674">
    <property type="protein sequence ID" value="AAN42786.1"/>
    <property type="molecule type" value="Genomic_DNA"/>
</dbReference>
<dbReference type="EMBL" id="AE014073">
    <property type="protein sequence ID" value="AAP16677.1"/>
    <property type="molecule type" value="Genomic_DNA"/>
</dbReference>
<dbReference type="RefSeq" id="NP_707079.3">
    <property type="nucleotide sequence ID" value="NC_004337.2"/>
</dbReference>
<dbReference type="STRING" id="198214.SF1170"/>
<dbReference type="PaxDb" id="198214-SF1170"/>
<dbReference type="GeneID" id="1025114"/>
<dbReference type="KEGG" id="sfl:SF1170"/>
<dbReference type="KEGG" id="sfx:S1258"/>
<dbReference type="PATRIC" id="fig|198214.7.peg.1383"/>
<dbReference type="HOGENOM" id="CLU_109769_2_0_6"/>
<dbReference type="Proteomes" id="UP000001006">
    <property type="component" value="Chromosome"/>
</dbReference>
<dbReference type="Proteomes" id="UP000002673">
    <property type="component" value="Chromosome"/>
</dbReference>
<dbReference type="HAMAP" id="MF_00676">
    <property type="entry name" value="UPF0260"/>
    <property type="match status" value="1"/>
</dbReference>
<dbReference type="InterPro" id="IPR005358">
    <property type="entry name" value="Puta_zinc/iron-chelating_dom"/>
</dbReference>
<dbReference type="InterPro" id="IPR008228">
    <property type="entry name" value="UCP006173"/>
</dbReference>
<dbReference type="NCBIfam" id="NF003498">
    <property type="entry name" value="PRK05170.1-1"/>
    <property type="match status" value="1"/>
</dbReference>
<dbReference type="NCBIfam" id="NF003501">
    <property type="entry name" value="PRK05170.1-5"/>
    <property type="match status" value="1"/>
</dbReference>
<dbReference type="NCBIfam" id="NF003503">
    <property type="entry name" value="PRK05170.2-1"/>
    <property type="match status" value="1"/>
</dbReference>
<dbReference type="NCBIfam" id="NF003507">
    <property type="entry name" value="PRK05170.2-5"/>
    <property type="match status" value="1"/>
</dbReference>
<dbReference type="PANTHER" id="PTHR37421">
    <property type="entry name" value="UPF0260 PROTEIN YCGN"/>
    <property type="match status" value="1"/>
</dbReference>
<dbReference type="PANTHER" id="PTHR37421:SF1">
    <property type="entry name" value="UPF0260 PROTEIN YCGN"/>
    <property type="match status" value="1"/>
</dbReference>
<dbReference type="Pfam" id="PF03692">
    <property type="entry name" value="CxxCxxCC"/>
    <property type="match status" value="1"/>
</dbReference>
<dbReference type="PIRSF" id="PIRSF006173">
    <property type="entry name" value="UCP006173"/>
    <property type="match status" value="1"/>
</dbReference>